<organism>
    <name type="scientific">Escherichia coli (strain K12)</name>
    <dbReference type="NCBI Taxonomy" id="83333"/>
    <lineage>
        <taxon>Bacteria</taxon>
        <taxon>Pseudomonadati</taxon>
        <taxon>Pseudomonadota</taxon>
        <taxon>Gammaproteobacteria</taxon>
        <taxon>Enterobacterales</taxon>
        <taxon>Enterobacteriaceae</taxon>
        <taxon>Escherichia</taxon>
    </lineage>
</organism>
<name>RHTA_ECOLI</name>
<feature type="chain" id="PRO_0000108162" description="Threonine/homoserine exporter RhtA">
    <location>
        <begin position="1"/>
        <end position="295"/>
    </location>
</feature>
<feature type="topological domain" description="Cytoplasmic" evidence="1">
    <location>
        <begin position="1"/>
        <end position="9"/>
    </location>
</feature>
<feature type="transmembrane region" description="Helical" evidence="1">
    <location>
        <begin position="10"/>
        <end position="30"/>
    </location>
</feature>
<feature type="topological domain" description="Periplasmic" evidence="1">
    <location>
        <begin position="31"/>
        <end position="38"/>
    </location>
</feature>
<feature type="transmembrane region" description="Helical" evidence="1">
    <location>
        <begin position="39"/>
        <end position="59"/>
    </location>
</feature>
<feature type="topological domain" description="Cytoplasmic" evidence="1">
    <location>
        <begin position="60"/>
        <end position="71"/>
    </location>
</feature>
<feature type="transmembrane region" description="Helical" evidence="1">
    <location>
        <begin position="72"/>
        <end position="92"/>
    </location>
</feature>
<feature type="topological domain" description="Periplasmic" evidence="1">
    <location>
        <position position="93"/>
    </location>
</feature>
<feature type="transmembrane region" description="Helical" evidence="1">
    <location>
        <begin position="94"/>
        <end position="114"/>
    </location>
</feature>
<feature type="topological domain" description="Cytoplasmic" evidence="1">
    <location>
        <begin position="115"/>
        <end position="118"/>
    </location>
</feature>
<feature type="transmembrane region" description="Helical" evidence="1">
    <location>
        <begin position="119"/>
        <end position="139"/>
    </location>
</feature>
<feature type="topological domain" description="Periplasmic" evidence="1">
    <location>
        <begin position="140"/>
        <end position="146"/>
    </location>
</feature>
<feature type="transmembrane region" description="Helical" evidence="1">
    <location>
        <begin position="147"/>
        <end position="167"/>
    </location>
</feature>
<feature type="topological domain" description="Cytoplasmic" evidence="1">
    <location>
        <begin position="168"/>
        <end position="175"/>
    </location>
</feature>
<feature type="transmembrane region" description="Helical" evidence="1">
    <location>
        <begin position="176"/>
        <end position="196"/>
    </location>
</feature>
<feature type="topological domain" description="Periplasmic" evidence="1">
    <location>
        <begin position="197"/>
        <end position="200"/>
    </location>
</feature>
<feature type="transmembrane region" description="Helical" evidence="1">
    <location>
        <begin position="201"/>
        <end position="221"/>
    </location>
</feature>
<feature type="topological domain" description="Cytoplasmic" evidence="1">
    <location>
        <begin position="222"/>
        <end position="237"/>
    </location>
</feature>
<feature type="transmembrane region" description="Helical" evidence="1">
    <location>
        <begin position="238"/>
        <end position="258"/>
    </location>
</feature>
<feature type="topological domain" description="Periplasmic" evidence="1">
    <location>
        <begin position="259"/>
        <end position="262"/>
    </location>
</feature>
<feature type="transmembrane region" description="Helical" evidence="1">
    <location>
        <begin position="263"/>
        <end position="283"/>
    </location>
</feature>
<feature type="topological domain" description="Cytoplasmic" evidence="1">
    <location>
        <begin position="284"/>
        <end position="295"/>
    </location>
</feature>
<feature type="domain" description="EamA 1">
    <location>
        <begin position="30"/>
        <end position="135"/>
    </location>
</feature>
<feature type="domain" description="EamA 2">
    <location>
        <begin position="159"/>
        <end position="278"/>
    </location>
</feature>
<feature type="sequence conflict" description="In Ref. 1; AAA21854." evidence="3" ref="1">
    <original>A</original>
    <variation>R</variation>
    <location>
        <position position="268"/>
    </location>
</feature>
<comment type="function">
    <text evidence="2">Involved in the efflux of threonine and homoserine. Can also export other amino acids such as proline, serine, histidine and cysteine.</text>
</comment>
<comment type="subcellular location">
    <subcellularLocation>
        <location evidence="2">Cell inner membrane</location>
        <topology evidence="2">Multi-pass membrane protein</topology>
    </subcellularLocation>
</comment>
<comment type="similarity">
    <text evidence="3">Belongs to the drug/metabolite transporter (DMT) superfamily. 10 TMS drug/metabolite exporter (DME) (TC 2.A.7.3) family.</text>
</comment>
<dbReference type="EMBL" id="U04242">
    <property type="protein sequence ID" value="AAA21854.1"/>
    <property type="molecule type" value="Genomic_DNA"/>
</dbReference>
<dbReference type="EMBL" id="U00096">
    <property type="protein sequence ID" value="AAC73900.1"/>
    <property type="molecule type" value="Genomic_DNA"/>
</dbReference>
<dbReference type="EMBL" id="AP009048">
    <property type="protein sequence ID" value="BAA35485.1"/>
    <property type="molecule type" value="Genomic_DNA"/>
</dbReference>
<dbReference type="PIR" id="E64818">
    <property type="entry name" value="E64818"/>
</dbReference>
<dbReference type="RefSeq" id="NP_415334.1">
    <property type="nucleotide sequence ID" value="NC_000913.3"/>
</dbReference>
<dbReference type="RefSeq" id="WP_001295297.1">
    <property type="nucleotide sequence ID" value="NZ_STEB01000019.1"/>
</dbReference>
<dbReference type="SMR" id="P0AA67"/>
<dbReference type="BioGRID" id="4259985">
    <property type="interactions" value="17"/>
</dbReference>
<dbReference type="FunCoup" id="P0AA67">
    <property type="interactions" value="127"/>
</dbReference>
<dbReference type="STRING" id="511145.b0813"/>
<dbReference type="TCDB" id="2.A.7.3.6">
    <property type="family name" value="the drug/metabolite transporter (dmt) superfamily"/>
</dbReference>
<dbReference type="PaxDb" id="511145-b0813"/>
<dbReference type="EnsemblBacteria" id="AAC73900">
    <property type="protein sequence ID" value="AAC73900"/>
    <property type="gene ID" value="b0813"/>
</dbReference>
<dbReference type="GeneID" id="93776615"/>
<dbReference type="GeneID" id="947045"/>
<dbReference type="KEGG" id="ecj:JW0798"/>
<dbReference type="KEGG" id="eco:b0813"/>
<dbReference type="KEGG" id="ecoc:C3026_05120"/>
<dbReference type="PATRIC" id="fig|1411691.4.peg.1465"/>
<dbReference type="EchoBASE" id="EB2055"/>
<dbReference type="eggNOG" id="COG5006">
    <property type="taxonomic scope" value="Bacteria"/>
</dbReference>
<dbReference type="HOGENOM" id="CLU_057295_0_1_6"/>
<dbReference type="InParanoid" id="P0AA67"/>
<dbReference type="OMA" id="MWAAYIV"/>
<dbReference type="OrthoDB" id="9815120at2"/>
<dbReference type="PhylomeDB" id="P0AA67"/>
<dbReference type="BioCyc" id="EcoCyc:EG12134-MONOMER"/>
<dbReference type="BioCyc" id="MetaCyc:EG12134-MONOMER"/>
<dbReference type="PRO" id="PR:P0AA67"/>
<dbReference type="Proteomes" id="UP000000625">
    <property type="component" value="Chromosome"/>
</dbReference>
<dbReference type="GO" id="GO:0005886">
    <property type="term" value="C:plasma membrane"/>
    <property type="evidence" value="ECO:0000314"/>
    <property type="project" value="EcoCyc"/>
</dbReference>
<dbReference type="GO" id="GO:0042970">
    <property type="term" value="F:homoserine transmembrane transporter activity"/>
    <property type="evidence" value="ECO:0000314"/>
    <property type="project" value="EcoCyc"/>
</dbReference>
<dbReference type="GO" id="GO:0015291">
    <property type="term" value="F:secondary active transmembrane transporter activity"/>
    <property type="evidence" value="ECO:0000314"/>
    <property type="project" value="EcoCyc"/>
</dbReference>
<dbReference type="GO" id="GO:0015565">
    <property type="term" value="F:threonine efflux transmembrane transporter activity"/>
    <property type="evidence" value="ECO:0000314"/>
    <property type="project" value="EcoCyc"/>
</dbReference>
<dbReference type="GO" id="GO:0042968">
    <property type="term" value="P:homoserine transport"/>
    <property type="evidence" value="ECO:0000314"/>
    <property type="project" value="EcoCyc"/>
</dbReference>
<dbReference type="GO" id="GO:0015826">
    <property type="term" value="P:threonine transport"/>
    <property type="evidence" value="ECO:0000314"/>
    <property type="project" value="EcoCyc"/>
</dbReference>
<dbReference type="InterPro" id="IPR050638">
    <property type="entry name" value="AA-Vitamin_Transporters"/>
</dbReference>
<dbReference type="InterPro" id="IPR000620">
    <property type="entry name" value="EamA_dom"/>
</dbReference>
<dbReference type="NCBIfam" id="NF007823">
    <property type="entry name" value="PRK10532.1"/>
    <property type="match status" value="1"/>
</dbReference>
<dbReference type="PANTHER" id="PTHR32322">
    <property type="entry name" value="INNER MEMBRANE TRANSPORTER"/>
    <property type="match status" value="1"/>
</dbReference>
<dbReference type="PANTHER" id="PTHR32322:SF18">
    <property type="entry name" value="S-ADENOSYLMETHIONINE_S-ADENOSYLHOMOCYSTEINE TRANSPORTER"/>
    <property type="match status" value="1"/>
</dbReference>
<dbReference type="Pfam" id="PF00892">
    <property type="entry name" value="EamA"/>
    <property type="match status" value="1"/>
</dbReference>
<dbReference type="SUPFAM" id="SSF103481">
    <property type="entry name" value="Multidrug resistance efflux transporter EmrE"/>
    <property type="match status" value="2"/>
</dbReference>
<keyword id="KW-0029">Amino-acid transport</keyword>
<keyword id="KW-0997">Cell inner membrane</keyword>
<keyword id="KW-1003">Cell membrane</keyword>
<keyword id="KW-0472">Membrane</keyword>
<keyword id="KW-1185">Reference proteome</keyword>
<keyword id="KW-0677">Repeat</keyword>
<keyword id="KW-0812">Transmembrane</keyword>
<keyword id="KW-1133">Transmembrane helix</keyword>
<keyword id="KW-0813">Transport</keyword>
<protein>
    <recommendedName>
        <fullName>Threonine/homoserine exporter RhtA</fullName>
    </recommendedName>
</protein>
<proteinExistence type="evidence at protein level"/>
<accession>P0AA67</accession>
<accession>P36545</accession>
<accession>P75784</accession>
<reference key="1">
    <citation type="journal article" date="1994" name="J. Bacteriol.">
        <title>Characterization of the sigma 38-dependent expression of a core Escherichia coli starvation gene, pexB.</title>
        <authorList>
            <person name="Lomovskaya O.L."/>
            <person name="Kidwell J.P."/>
            <person name="Matin A."/>
        </authorList>
    </citation>
    <scope>NUCLEOTIDE SEQUENCE [GENOMIC DNA]</scope>
    <source>
        <strain>K12 / W3110 / ATCC 27325 / DSM 5911</strain>
    </source>
</reference>
<reference key="2">
    <citation type="journal article" date="1996" name="DNA Res.">
        <title>A 718-kb DNA sequence of the Escherichia coli K-12 genome corresponding to the 12.7-28.0 min region on the linkage map.</title>
        <authorList>
            <person name="Oshima T."/>
            <person name="Aiba H."/>
            <person name="Baba T."/>
            <person name="Fujita K."/>
            <person name="Hayashi K."/>
            <person name="Honjo A."/>
            <person name="Ikemoto K."/>
            <person name="Inada T."/>
            <person name="Itoh T."/>
            <person name="Kajihara M."/>
            <person name="Kanai K."/>
            <person name="Kashimoto K."/>
            <person name="Kimura S."/>
            <person name="Kitagawa M."/>
            <person name="Makino K."/>
            <person name="Masuda S."/>
            <person name="Miki T."/>
            <person name="Mizobuchi K."/>
            <person name="Mori H."/>
            <person name="Motomura K."/>
            <person name="Nakamura Y."/>
            <person name="Nashimoto H."/>
            <person name="Nishio Y."/>
            <person name="Saito N."/>
            <person name="Sampei G."/>
            <person name="Seki Y."/>
            <person name="Tagami H."/>
            <person name="Takemoto K."/>
            <person name="Wada C."/>
            <person name="Yamamoto Y."/>
            <person name="Yano M."/>
            <person name="Horiuchi T."/>
        </authorList>
    </citation>
    <scope>NUCLEOTIDE SEQUENCE [LARGE SCALE GENOMIC DNA]</scope>
    <source>
        <strain>K12 / W3110 / ATCC 27325 / DSM 5911</strain>
    </source>
</reference>
<reference key="3">
    <citation type="journal article" date="1997" name="Science">
        <title>The complete genome sequence of Escherichia coli K-12.</title>
        <authorList>
            <person name="Blattner F.R."/>
            <person name="Plunkett G. III"/>
            <person name="Bloch C.A."/>
            <person name="Perna N.T."/>
            <person name="Burland V."/>
            <person name="Riley M."/>
            <person name="Collado-Vides J."/>
            <person name="Glasner J.D."/>
            <person name="Rode C.K."/>
            <person name="Mayhew G.F."/>
            <person name="Gregor J."/>
            <person name="Davis N.W."/>
            <person name="Kirkpatrick H.A."/>
            <person name="Goeden M.A."/>
            <person name="Rose D.J."/>
            <person name="Mau B."/>
            <person name="Shao Y."/>
        </authorList>
    </citation>
    <scope>NUCLEOTIDE SEQUENCE [LARGE SCALE GENOMIC DNA]</scope>
    <source>
        <strain>K12 / MG1655 / ATCC 47076</strain>
    </source>
</reference>
<reference key="4">
    <citation type="journal article" date="2006" name="Mol. Syst. Biol.">
        <title>Highly accurate genome sequences of Escherichia coli K-12 strains MG1655 and W3110.</title>
        <authorList>
            <person name="Hayashi K."/>
            <person name="Morooka N."/>
            <person name="Yamamoto Y."/>
            <person name="Fujita K."/>
            <person name="Isono K."/>
            <person name="Choi S."/>
            <person name="Ohtsubo E."/>
            <person name="Baba T."/>
            <person name="Wanner B.L."/>
            <person name="Mori H."/>
            <person name="Horiuchi T."/>
        </authorList>
    </citation>
    <scope>NUCLEOTIDE SEQUENCE [LARGE SCALE GENOMIC DNA]</scope>
    <source>
        <strain>K12 / W3110 / ATCC 27325 / DSM 5911</strain>
    </source>
</reference>
<reference key="5">
    <citation type="journal article" date="2003" name="Res. Microbiol.">
        <title>Identification and characterization of the new gene rhtA involved in threonine and homoserine efflux in Escherichia coli.</title>
        <authorList>
            <person name="Livshits V.A."/>
            <person name="Zakataeva N.P."/>
            <person name="Aleshin V.V."/>
            <person name="Vitushkina M.V."/>
        </authorList>
    </citation>
    <scope>FUNCTION</scope>
    <scope>SUBCELLULAR LOCATION</scope>
</reference>
<reference key="6">
    <citation type="journal article" date="2005" name="Science">
        <title>Global topology analysis of the Escherichia coli inner membrane proteome.</title>
        <authorList>
            <person name="Daley D.O."/>
            <person name="Rapp M."/>
            <person name="Granseth E."/>
            <person name="Melen K."/>
            <person name="Drew D."/>
            <person name="von Heijne G."/>
        </authorList>
    </citation>
    <scope>TOPOLOGY [LARGE SCALE ANALYSIS]</scope>
    <source>
        <strain>K12 / MG1655 / ATCC 47076</strain>
    </source>
</reference>
<evidence type="ECO:0000255" key="1"/>
<evidence type="ECO:0000269" key="2">
    <source>
    </source>
</evidence>
<evidence type="ECO:0000305" key="3"/>
<gene>
    <name type="primary">rhtA</name>
    <name type="synonym">ybiF</name>
    <name type="ordered locus">b0813</name>
    <name type="ordered locus">JW0798</name>
</gene>
<sequence>MPGSLRKMPVWLPIVILLVAMASIQGGASLAKSLFPLVGAPGVTALRLALGTLILIAFFKPWRLRFAKEQRLPLLFYGVSLGGMNYLFYLSIQTVPLGIAVALEFTGPLAVALFSSRRPVDFVWVVLAVLGLWFLLPLGQDVSHVDLTGCALALGAGACWAIYILSGQRAGAEHGPATVAIGSLIAALIFVPIGALQAGEALWHWSVIPLGLAVAILSTALPYSLEMIALTRLPTRTFGTLMSMEPALAAVSGMIFLGETLTPIQLLALGAIIAASMGSTLTVRKESKIKELDIN</sequence>